<name>RL36_ALKMQ</name>
<accession>A6TWF7</accession>
<dbReference type="EMBL" id="CP000724">
    <property type="protein sequence ID" value="ABR50525.1"/>
    <property type="molecule type" value="Genomic_DNA"/>
</dbReference>
<dbReference type="RefSeq" id="WP_010095733.1">
    <property type="nucleotide sequence ID" value="NC_009633.1"/>
</dbReference>
<dbReference type="SMR" id="A6TWF7"/>
<dbReference type="STRING" id="293826.Amet_4453"/>
<dbReference type="GeneID" id="71512926"/>
<dbReference type="KEGG" id="amt:Amet_4453"/>
<dbReference type="eggNOG" id="COG0257">
    <property type="taxonomic scope" value="Bacteria"/>
</dbReference>
<dbReference type="HOGENOM" id="CLU_135723_6_2_9"/>
<dbReference type="OrthoDB" id="9802520at2"/>
<dbReference type="Proteomes" id="UP000001572">
    <property type="component" value="Chromosome"/>
</dbReference>
<dbReference type="GO" id="GO:0005737">
    <property type="term" value="C:cytoplasm"/>
    <property type="evidence" value="ECO:0007669"/>
    <property type="project" value="UniProtKB-ARBA"/>
</dbReference>
<dbReference type="GO" id="GO:1990904">
    <property type="term" value="C:ribonucleoprotein complex"/>
    <property type="evidence" value="ECO:0007669"/>
    <property type="project" value="UniProtKB-KW"/>
</dbReference>
<dbReference type="GO" id="GO:0005840">
    <property type="term" value="C:ribosome"/>
    <property type="evidence" value="ECO:0007669"/>
    <property type="project" value="UniProtKB-KW"/>
</dbReference>
<dbReference type="GO" id="GO:0003735">
    <property type="term" value="F:structural constituent of ribosome"/>
    <property type="evidence" value="ECO:0007669"/>
    <property type="project" value="InterPro"/>
</dbReference>
<dbReference type="GO" id="GO:0006412">
    <property type="term" value="P:translation"/>
    <property type="evidence" value="ECO:0007669"/>
    <property type="project" value="UniProtKB-UniRule"/>
</dbReference>
<dbReference type="HAMAP" id="MF_00251">
    <property type="entry name" value="Ribosomal_bL36"/>
    <property type="match status" value="1"/>
</dbReference>
<dbReference type="InterPro" id="IPR000473">
    <property type="entry name" value="Ribosomal_bL36"/>
</dbReference>
<dbReference type="InterPro" id="IPR035977">
    <property type="entry name" value="Ribosomal_bL36_sp"/>
</dbReference>
<dbReference type="NCBIfam" id="TIGR01022">
    <property type="entry name" value="rpmJ_bact"/>
    <property type="match status" value="1"/>
</dbReference>
<dbReference type="PANTHER" id="PTHR42888">
    <property type="entry name" value="50S RIBOSOMAL PROTEIN L36, CHLOROPLASTIC"/>
    <property type="match status" value="1"/>
</dbReference>
<dbReference type="PANTHER" id="PTHR42888:SF1">
    <property type="entry name" value="LARGE RIBOSOMAL SUBUNIT PROTEIN BL36C"/>
    <property type="match status" value="1"/>
</dbReference>
<dbReference type="Pfam" id="PF00444">
    <property type="entry name" value="Ribosomal_L36"/>
    <property type="match status" value="1"/>
</dbReference>
<dbReference type="SUPFAM" id="SSF57840">
    <property type="entry name" value="Ribosomal protein L36"/>
    <property type="match status" value="1"/>
</dbReference>
<dbReference type="PROSITE" id="PS00828">
    <property type="entry name" value="RIBOSOMAL_L36"/>
    <property type="match status" value="1"/>
</dbReference>
<comment type="similarity">
    <text evidence="1">Belongs to the bacterial ribosomal protein bL36 family.</text>
</comment>
<evidence type="ECO:0000255" key="1">
    <source>
        <dbReference type="HAMAP-Rule" id="MF_00251"/>
    </source>
</evidence>
<evidence type="ECO:0000305" key="2"/>
<reference key="1">
    <citation type="journal article" date="2016" name="Genome Announc.">
        <title>Complete genome sequence of Alkaliphilus metalliredigens strain QYMF, an alkaliphilic and metal-reducing bacterium isolated from borax-contaminated leachate ponds.</title>
        <authorList>
            <person name="Hwang C."/>
            <person name="Copeland A."/>
            <person name="Lucas S."/>
            <person name="Lapidus A."/>
            <person name="Barry K."/>
            <person name="Detter J.C."/>
            <person name="Glavina Del Rio T."/>
            <person name="Hammon N."/>
            <person name="Israni S."/>
            <person name="Dalin E."/>
            <person name="Tice H."/>
            <person name="Pitluck S."/>
            <person name="Chertkov O."/>
            <person name="Brettin T."/>
            <person name="Bruce D."/>
            <person name="Han C."/>
            <person name="Schmutz J."/>
            <person name="Larimer F."/>
            <person name="Land M.L."/>
            <person name="Hauser L."/>
            <person name="Kyrpides N."/>
            <person name="Mikhailova N."/>
            <person name="Ye Q."/>
            <person name="Zhou J."/>
            <person name="Richardson P."/>
            <person name="Fields M.W."/>
        </authorList>
    </citation>
    <scope>NUCLEOTIDE SEQUENCE [LARGE SCALE GENOMIC DNA]</scope>
    <source>
        <strain>QYMF</strain>
    </source>
</reference>
<keyword id="KW-1185">Reference proteome</keyword>
<keyword id="KW-0687">Ribonucleoprotein</keyword>
<keyword id="KW-0689">Ribosomal protein</keyword>
<protein>
    <recommendedName>
        <fullName evidence="1">Large ribosomal subunit protein bL36</fullName>
    </recommendedName>
    <alternativeName>
        <fullName evidence="2">50S ribosomal protein L36</fullName>
    </alternativeName>
</protein>
<proteinExistence type="inferred from homology"/>
<sequence length="37" mass="4251">MKVRASVKPICEKCKVIKRKGKVMVICENPKHKQKQG</sequence>
<organism>
    <name type="scientific">Alkaliphilus metalliredigens (strain QYMF)</name>
    <dbReference type="NCBI Taxonomy" id="293826"/>
    <lineage>
        <taxon>Bacteria</taxon>
        <taxon>Bacillati</taxon>
        <taxon>Bacillota</taxon>
        <taxon>Clostridia</taxon>
        <taxon>Peptostreptococcales</taxon>
        <taxon>Natronincolaceae</taxon>
        <taxon>Alkaliphilus</taxon>
    </lineage>
</organism>
<gene>
    <name evidence="1" type="primary">rpmJ</name>
    <name type="ordered locus">Amet_4453</name>
</gene>
<feature type="chain" id="PRO_1000059030" description="Large ribosomal subunit protein bL36">
    <location>
        <begin position="1"/>
        <end position="37"/>
    </location>
</feature>